<sequence length="314" mass="36666">MRALFYKDGKLFTDNNFLNPVSDDNPAYEVLQHVKIPTHLTDVVVYEQTWEEALTRLIFVGSDSKGRRQYFYGKMHVQNRNAKRDRIFVRVYNVMKRINCFINKNIKKSSTDSNYQLAVFMLMETMFFIRFGKMKYLKENETVGLLTLKNKHIEISPDEIVIKFVGKDKVSHEFVVHKSNRLYKPLLKLTDDSSPEEFLFNKLSERKVYECIKQFGIRIKDLRTYGVNYTFLYNFWTNVKSISPLPSPKKLIALTIKQTAEVVGHTPSISKRAYMATTILEMVKDKNFLDVVSKTTFDEFLSIVVDHVKSSTDG</sequence>
<dbReference type="EC" id="5.6.2.1" evidence="3"/>
<dbReference type="EMBL" id="M13209">
    <property type="protein sequence ID" value="AAB59842.1"/>
    <property type="molecule type" value="Genomic_DNA"/>
</dbReference>
<dbReference type="EMBL" id="L13447">
    <property type="protein sequence ID" value="AAA02841.1"/>
    <property type="molecule type" value="Unassigned_DNA"/>
</dbReference>
<dbReference type="EMBL" id="AY243312">
    <property type="protein sequence ID" value="AAO89383.1"/>
    <property type="molecule type" value="Genomic_DNA"/>
</dbReference>
<dbReference type="PIR" id="G24481">
    <property type="entry name" value="QQVZH7"/>
</dbReference>
<dbReference type="RefSeq" id="YP_232986.1">
    <property type="nucleotide sequence ID" value="NC_006998.1"/>
</dbReference>
<dbReference type="PDB" id="1A41">
    <property type="method" value="X-ray"/>
    <property type="resolution" value="2.30 A"/>
    <property type="chains" value="A=81-314"/>
</dbReference>
<dbReference type="PDB" id="1VCC">
    <property type="method" value="X-ray"/>
    <property type="resolution" value="1.60 A"/>
    <property type="chains" value="A=1-77"/>
</dbReference>
<dbReference type="PDBsum" id="1A41"/>
<dbReference type="PDBsum" id="1VCC"/>
<dbReference type="SMR" id="P68698"/>
<dbReference type="DNASU" id="3707560"/>
<dbReference type="GeneID" id="3707560"/>
<dbReference type="KEGG" id="vg:3707560"/>
<dbReference type="BRENDA" id="5.6.2.1">
    <property type="organism ID" value="908"/>
</dbReference>
<dbReference type="EvolutionaryTrace" id="P68698"/>
<dbReference type="Proteomes" id="UP000000344">
    <property type="component" value="Genome"/>
</dbReference>
<dbReference type="GO" id="GO:0044423">
    <property type="term" value="C:virion component"/>
    <property type="evidence" value="ECO:0007669"/>
    <property type="project" value="UniProtKB-KW"/>
</dbReference>
<dbReference type="GO" id="GO:0003677">
    <property type="term" value="F:DNA binding"/>
    <property type="evidence" value="ECO:0007669"/>
    <property type="project" value="UniProtKB-KW"/>
</dbReference>
<dbReference type="GO" id="GO:0003917">
    <property type="term" value="F:DNA topoisomerase type I (single strand cut, ATP-independent) activity"/>
    <property type="evidence" value="ECO:0007669"/>
    <property type="project" value="UniProtKB-EC"/>
</dbReference>
<dbReference type="GO" id="GO:0006265">
    <property type="term" value="P:DNA topological change"/>
    <property type="evidence" value="ECO:0007669"/>
    <property type="project" value="InterPro"/>
</dbReference>
<dbReference type="CDD" id="cd00659">
    <property type="entry name" value="Topo_IB_C"/>
    <property type="match status" value="1"/>
</dbReference>
<dbReference type="Gene3D" id="3.30.66.10">
    <property type="entry name" value="DNA topoisomerase I domain"/>
    <property type="match status" value="1"/>
</dbReference>
<dbReference type="Gene3D" id="3.90.15.10">
    <property type="entry name" value="Topoisomerase I, Chain A, domain 3"/>
    <property type="match status" value="1"/>
</dbReference>
<dbReference type="InterPro" id="IPR011010">
    <property type="entry name" value="DNA_brk_join_enz"/>
</dbReference>
<dbReference type="InterPro" id="IPR035447">
    <property type="entry name" value="DNA_topo_I_N_sf"/>
</dbReference>
<dbReference type="InterPro" id="IPR001631">
    <property type="entry name" value="TopoI"/>
</dbReference>
<dbReference type="InterPro" id="IPR014711">
    <property type="entry name" value="TopoI_cat_a-hlx-sub_euk"/>
</dbReference>
<dbReference type="InterPro" id="IPR013500">
    <property type="entry name" value="TopoI_cat_euk"/>
</dbReference>
<dbReference type="InterPro" id="IPR015346">
    <property type="entry name" value="TopoI_N_vir"/>
</dbReference>
<dbReference type="InterPro" id="IPR018521">
    <property type="entry name" value="TopoIB_AS"/>
</dbReference>
<dbReference type="Pfam" id="PF01028">
    <property type="entry name" value="Topoisom_I"/>
    <property type="match status" value="1"/>
</dbReference>
<dbReference type="Pfam" id="PF09266">
    <property type="entry name" value="VirDNA-topo-I_N"/>
    <property type="match status" value="1"/>
</dbReference>
<dbReference type="PRINTS" id="PR00416">
    <property type="entry name" value="EUTPISMRASEI"/>
</dbReference>
<dbReference type="SUPFAM" id="SSF56349">
    <property type="entry name" value="DNA breaking-rejoining enzymes"/>
    <property type="match status" value="1"/>
</dbReference>
<dbReference type="SUPFAM" id="SSF55869">
    <property type="entry name" value="DNA topoisomerase I domain"/>
    <property type="match status" value="1"/>
</dbReference>
<dbReference type="PROSITE" id="PS00176">
    <property type="entry name" value="TOPO_IB_1"/>
    <property type="match status" value="1"/>
</dbReference>
<dbReference type="PROSITE" id="PS52038">
    <property type="entry name" value="TOPO_IB_2"/>
    <property type="match status" value="1"/>
</dbReference>
<organismHost>
    <name type="scientific">Bos taurus</name>
    <name type="common">Bovine</name>
    <dbReference type="NCBI Taxonomy" id="9913"/>
</organismHost>
<protein>
    <recommendedName>
        <fullName>DNA topoisomerase 1B</fullName>
        <shortName>TopIB</shortName>
        <ecNumber evidence="3">5.6.2.1</ecNumber>
    </recommendedName>
    <alternativeName>
        <fullName>DNA topoisomerase I</fullName>
    </alternativeName>
    <alternativeName>
        <fullName>Late protein H6</fullName>
    </alternativeName>
</protein>
<evidence type="ECO:0000250" key="1">
    <source>
        <dbReference type="UniProtKB" id="P32989"/>
    </source>
</evidence>
<evidence type="ECO:0000255" key="2">
    <source>
        <dbReference type="PROSITE-ProRule" id="PRU01382"/>
    </source>
</evidence>
<evidence type="ECO:0000255" key="3">
    <source>
        <dbReference type="PROSITE-ProRule" id="PRU10130"/>
    </source>
</evidence>
<evidence type="ECO:0000269" key="4">
    <source>
    </source>
</evidence>
<evidence type="ECO:0000269" key="5">
    <source>
    </source>
</evidence>
<evidence type="ECO:0000269" key="6">
    <source>
    </source>
</evidence>
<evidence type="ECO:0000269" key="7">
    <source>
    </source>
</evidence>
<evidence type="ECO:0000305" key="8"/>
<evidence type="ECO:0007829" key="9">
    <source>
        <dbReference type="PDB" id="1A41"/>
    </source>
</evidence>
<evidence type="ECO:0007829" key="10">
    <source>
        <dbReference type="PDB" id="1VCC"/>
    </source>
</evidence>
<gene>
    <name type="primary">OPG111</name>
    <name type="synonym">TOP1</name>
    <name type="ordered locus">VACWR104</name>
    <name type="ORF">H6R</name>
</gene>
<proteinExistence type="evidence at protein level"/>
<accession>P68698</accession>
<accession>P08585</accession>
<comment type="function">
    <text evidence="5 6">Releases the supercoiling and torsional tension of DNA introduced during the DNA replication and transcription by transiently cleaving and rejoining one strand of the DNA duplex. Introduces a single-strand break via transesterification at the specific target site 5'-[CT]CCTTp site in duplex DNA. The scissile phosphodiester is attacked by the catalytic tyrosine of the enzyme, resulting in the formation of a DNA-(3'-phosphotyrosyl)-enzyme intermediate and the expulsion of a 5'-OH DNA strand. The free DNA strand then undergoes passage around the unbroken strand thus removing DNA supercoils. Finally, in the religation step, the DNA 5'-OH attacks the covalent intermediate to expel the active-site tyrosine and restore the DNA phosphodiester backbone.</text>
</comment>
<comment type="catalytic activity">
    <reaction evidence="3">
        <text>ATP-independent breakage of single-stranded DNA, followed by passage and rejoining.</text>
        <dbReference type="EC" id="5.6.2.1"/>
    </reaction>
</comment>
<comment type="subcellular location">
    <subcellularLocation>
        <location evidence="8">Virion</location>
    </subcellularLocation>
</comment>
<comment type="induction">
    <text>Expressed in the late phase of the viral replicative cycle.</text>
</comment>
<comment type="similarity">
    <text evidence="8">Belongs to the type IB topoisomerase family.</text>
</comment>
<reference key="1">
    <citation type="journal article" date="1986" name="J. Virol.">
        <title>Conserved TAAATG sequence at the transcriptional and translational initiation sites of vaccinia virus late genes deduced by structural and functional analysis of the HindIII H genome fragment.</title>
        <authorList>
            <person name="Rosel J.L."/>
            <person name="Earl P.L."/>
            <person name="Weir J.P."/>
            <person name="Moss B."/>
        </authorList>
    </citation>
    <scope>NUCLEOTIDE SEQUENCE [GENOMIC DNA]</scope>
</reference>
<reference key="2">
    <citation type="journal article" date="1993" name="J. Biol. Chem.">
        <title>Biochemical analysis of mutant alleles of the vaccinia virus topoisomerase I carrying targeted substitutions in a highly conserved domain.</title>
        <authorList>
            <person name="Klemperer N."/>
            <person name="Traktman P."/>
        </authorList>
    </citation>
    <scope>NUCLEOTIDE SEQUENCE</scope>
    <scope>MUTAGENESIS</scope>
</reference>
<reference key="3">
    <citation type="submission" date="2003-02" db="EMBL/GenBank/DDBJ databases">
        <title>Sequencing of the coding region of Vaccinia-WR to an average 9-fold redundancy and an error rate of 0.16/10kb.</title>
        <authorList>
            <person name="Esposito J.J."/>
            <person name="Frace A.M."/>
            <person name="Sammons S.A."/>
            <person name="Olsen-Rasmussen M."/>
            <person name="Osborne J."/>
            <person name="Wohlhueter R."/>
        </authorList>
    </citation>
    <scope>NUCLEOTIDE SEQUENCE [LARGE SCALE GENOMIC DNA]</scope>
</reference>
<reference key="4">
    <citation type="journal article" date="1987" name="Proc. Natl. Acad. Sci. U.S.A.">
        <title>Identification of a vaccinia virus gene encoding a type I DNA topoisomerase.</title>
        <authorList>
            <person name="Shuman S."/>
            <person name="Moss B."/>
        </authorList>
    </citation>
    <scope>PROTEIN SEQUENCE OF 1-22</scope>
    <scope>IDENTIFICATION</scope>
</reference>
<reference key="5">
    <citation type="journal article" date="2005" name="J. Am. Chem. Soc.">
        <title>Analogues of vaccinia virus DNA topoisomerase I modified at the active site tyrosine.</title>
        <authorList>
            <person name="Gao R."/>
            <person name="Zhang Y."/>
            <person name="Choudhury A.K."/>
            <person name="Dedkova L.M."/>
            <person name="Hecht S.M."/>
        </authorList>
    </citation>
    <scope>ACTIVE SITE</scope>
    <scope>MUTAGENESIS OF TYR-274</scope>
</reference>
<reference key="6">
    <citation type="journal article" date="2006" name="Biochemistry">
        <title>Major groove interactions of vaccinia Topo I provide specificity by optimally positioning the covalent phosphotyrosine linkage.</title>
        <authorList>
            <person name="Nagarajan R."/>
            <person name="Stivers J.T."/>
        </authorList>
    </citation>
    <scope>FUNCTION</scope>
</reference>
<reference key="7">
    <citation type="journal article" date="2010" name="Biochemistry">
        <title>Mechanism and specificity of DNA strand exchange catalyzed by vaccinia DNA topoisomerase type I.</title>
        <authorList>
            <person name="Stahley M.R."/>
            <person name="Stivers J.T."/>
        </authorList>
    </citation>
    <scope>FUNCTION</scope>
</reference>
<reference key="8">
    <citation type="journal article" date="1994" name="Structure">
        <title>Crystal structure of the amino-terminal fragment of vaccinia virus DNA topoisomerase I at 1.6-A resolution.</title>
        <authorList>
            <person name="Sharma A."/>
            <person name="Hanai R."/>
            <person name="Mondragon A."/>
        </authorList>
    </citation>
    <scope>X-RAY CRYSTALLOGRAPHY (1.6 ANGSTROMS) OF 1-77</scope>
</reference>
<reference key="9">
    <citation type="journal article" date="1998" name="Cell">
        <title>Conservation of structure and mechanism between eukaryotic topoisomerase I and site-specific recombinases.</title>
        <authorList>
            <person name="Cheng C."/>
            <person name="Kussie P."/>
            <person name="Pavletich N."/>
            <person name="Shuman S."/>
        </authorList>
    </citation>
    <scope>X-RAY CRYSTALLOGRAPHY (2.3 ANGSTROMS) OF 81-314</scope>
</reference>
<feature type="chain" id="PRO_0000145216" description="DNA topoisomerase 1B">
    <location>
        <begin position="1"/>
        <end position="314"/>
    </location>
</feature>
<feature type="domain" description="Topo IB-type catalytic" evidence="2">
    <location>
        <begin position="77"/>
        <end position="314"/>
    </location>
</feature>
<feature type="active site" description="O-(3'-phospho-DNA)-tyrosine intermediate" evidence="2 3 4">
    <location>
        <position position="274"/>
    </location>
</feature>
<feature type="site" description="Involved in religation" evidence="1">
    <location>
        <position position="168"/>
    </location>
</feature>
<feature type="mutagenesis site" description="No change in activity." evidence="7">
    <original>G</original>
    <variation>E</variation>
    <variation>K</variation>
    <location>
        <position position="216"/>
    </location>
</feature>
<feature type="mutagenesis site" description="Temperature-sensitive for DNA relaxation in vitro." evidence="7">
    <original>I</original>
    <variation>P</variation>
    <location>
        <position position="217"/>
    </location>
</feature>
<feature type="mutagenesis site" description="Loss of activity." evidence="7">
    <original>K</original>
    <variation>D</variation>
    <location>
        <position position="220"/>
    </location>
</feature>
<feature type="mutagenesis site" description="Reduced activity." evidence="7">
    <original>K</original>
    <variation>I</variation>
    <variation>N</variation>
    <location>
        <position position="220"/>
    </location>
</feature>
<feature type="mutagenesis site" description="Loss of activity." evidence="7">
    <original>R</original>
    <variation>E</variation>
    <variation>G</variation>
    <location>
        <position position="223"/>
    </location>
</feature>
<feature type="mutagenesis site" description="Reduced activity." evidence="7">
    <original>R</original>
    <variation>K</variation>
    <location>
        <position position="223"/>
    </location>
</feature>
<feature type="mutagenesis site" description="Reduced activity." evidence="7">
    <original>T</original>
    <variation>G</variation>
    <variation>P</variation>
    <location>
        <position position="224"/>
    </location>
</feature>
<feature type="mutagenesis site" description="No change in activity." evidence="7">
    <original>Y</original>
    <variation>H</variation>
    <location>
        <position position="225"/>
    </location>
</feature>
<feature type="mutagenesis site" description="Reduced activity." evidence="7">
    <original>Y</original>
    <variation>R</variation>
    <variation>S</variation>
    <location>
        <position position="225"/>
    </location>
</feature>
<feature type="mutagenesis site" description="Complete loss of activity." evidence="4">
    <original>Y</original>
    <variation>F</variation>
    <location>
        <position position="274"/>
    </location>
</feature>
<feature type="strand" evidence="10">
    <location>
        <begin position="3"/>
        <end position="7"/>
    </location>
</feature>
<feature type="strand" evidence="10">
    <location>
        <begin position="10"/>
        <end position="14"/>
    </location>
</feature>
<feature type="helix" evidence="10">
    <location>
        <begin position="27"/>
        <end position="33"/>
    </location>
</feature>
<feature type="strand" evidence="10">
    <location>
        <begin position="41"/>
        <end position="46"/>
    </location>
</feature>
<feature type="helix" evidence="10">
    <location>
        <begin position="50"/>
        <end position="53"/>
    </location>
</feature>
<feature type="strand" evidence="10">
    <location>
        <begin position="56"/>
        <end position="62"/>
    </location>
</feature>
<feature type="strand" evidence="10">
    <location>
        <begin position="68"/>
        <end position="72"/>
    </location>
</feature>
<feature type="helix" evidence="9">
    <location>
        <begin position="82"/>
        <end position="105"/>
    </location>
</feature>
<feature type="turn" evidence="9">
    <location>
        <begin position="109"/>
        <end position="111"/>
    </location>
</feature>
<feature type="helix" evidence="9">
    <location>
        <begin position="115"/>
        <end position="125"/>
    </location>
</feature>
<feature type="helix" evidence="9">
    <location>
        <begin position="140"/>
        <end position="146"/>
    </location>
</feature>
<feature type="helix" evidence="9">
    <location>
        <begin position="150"/>
        <end position="152"/>
    </location>
</feature>
<feature type="strand" evidence="9">
    <location>
        <begin position="153"/>
        <end position="156"/>
    </location>
</feature>
<feature type="strand" evidence="9">
    <location>
        <begin position="159"/>
        <end position="162"/>
    </location>
</feature>
<feature type="strand" evidence="9">
    <location>
        <begin position="164"/>
        <end position="166"/>
    </location>
</feature>
<feature type="turn" evidence="9">
    <location>
        <begin position="167"/>
        <end position="169"/>
    </location>
</feature>
<feature type="strand" evidence="9">
    <location>
        <begin position="170"/>
        <end position="172"/>
    </location>
</feature>
<feature type="strand" evidence="9">
    <location>
        <begin position="175"/>
        <end position="177"/>
    </location>
</feature>
<feature type="strand" evidence="9">
    <location>
        <begin position="180"/>
        <end position="182"/>
    </location>
</feature>
<feature type="helix" evidence="9">
    <location>
        <begin position="183"/>
        <end position="189"/>
    </location>
</feature>
<feature type="strand" evidence="9">
    <location>
        <begin position="197"/>
        <end position="200"/>
    </location>
</feature>
<feature type="helix" evidence="9">
    <location>
        <begin position="205"/>
        <end position="214"/>
    </location>
</feature>
<feature type="helix" evidence="9">
    <location>
        <begin position="219"/>
        <end position="241"/>
    </location>
</feature>
<feature type="strand" evidence="9">
    <location>
        <begin position="242"/>
        <end position="244"/>
    </location>
</feature>
<feature type="helix" evidence="9">
    <location>
        <begin position="248"/>
        <end position="263"/>
    </location>
</feature>
<feature type="helix" evidence="9">
    <location>
        <begin position="269"/>
        <end position="282"/>
    </location>
</feature>
<feature type="helix" evidence="9">
    <location>
        <begin position="288"/>
        <end position="292"/>
    </location>
</feature>
<feature type="helix" evidence="9">
    <location>
        <begin position="297"/>
        <end position="309"/>
    </location>
</feature>
<keyword id="KW-0002">3D-structure</keyword>
<keyword id="KW-0903">Direct protein sequencing</keyword>
<keyword id="KW-0238">DNA-binding</keyword>
<keyword id="KW-0413">Isomerase</keyword>
<keyword id="KW-0426">Late protein</keyword>
<keyword id="KW-1185">Reference proteome</keyword>
<keyword id="KW-0799">Topoisomerase</keyword>
<keyword id="KW-0946">Virion</keyword>
<organism>
    <name type="scientific">Vaccinia virus (strain Western Reserve)</name>
    <name type="common">VACV</name>
    <name type="synonym">Vaccinia virus (strain WR)</name>
    <dbReference type="NCBI Taxonomy" id="10254"/>
    <lineage>
        <taxon>Viruses</taxon>
        <taxon>Varidnaviria</taxon>
        <taxon>Bamfordvirae</taxon>
        <taxon>Nucleocytoviricota</taxon>
        <taxon>Pokkesviricetes</taxon>
        <taxon>Chitovirales</taxon>
        <taxon>Poxviridae</taxon>
        <taxon>Chordopoxvirinae</taxon>
        <taxon>Orthopoxvirus</taxon>
        <taxon>Vaccinia virus</taxon>
    </lineage>
</organism>
<name>TOP1_VACCW</name>